<dbReference type="EMBL" id="CP000031">
    <property type="protein sequence ID" value="AAV97117.1"/>
    <property type="molecule type" value="Genomic_DNA"/>
</dbReference>
<dbReference type="RefSeq" id="WP_011048200.1">
    <property type="nucleotide sequence ID" value="NC_003911.12"/>
</dbReference>
<dbReference type="SMR" id="Q5LQJ7"/>
<dbReference type="STRING" id="246200.SPO2492"/>
<dbReference type="PaxDb" id="246200-SPO2492"/>
<dbReference type="KEGG" id="sil:SPO2492"/>
<dbReference type="eggNOG" id="COG0333">
    <property type="taxonomic scope" value="Bacteria"/>
</dbReference>
<dbReference type="HOGENOM" id="CLU_129084_1_3_5"/>
<dbReference type="OrthoDB" id="9801927at2"/>
<dbReference type="Proteomes" id="UP000001023">
    <property type="component" value="Chromosome"/>
</dbReference>
<dbReference type="GO" id="GO:0015934">
    <property type="term" value="C:large ribosomal subunit"/>
    <property type="evidence" value="ECO:0007669"/>
    <property type="project" value="InterPro"/>
</dbReference>
<dbReference type="GO" id="GO:0003735">
    <property type="term" value="F:structural constituent of ribosome"/>
    <property type="evidence" value="ECO:0007669"/>
    <property type="project" value="InterPro"/>
</dbReference>
<dbReference type="GO" id="GO:0006412">
    <property type="term" value="P:translation"/>
    <property type="evidence" value="ECO:0007669"/>
    <property type="project" value="UniProtKB-UniRule"/>
</dbReference>
<dbReference type="Gene3D" id="1.20.5.640">
    <property type="entry name" value="Single helix bin"/>
    <property type="match status" value="1"/>
</dbReference>
<dbReference type="HAMAP" id="MF_00340">
    <property type="entry name" value="Ribosomal_bL32"/>
    <property type="match status" value="1"/>
</dbReference>
<dbReference type="InterPro" id="IPR002677">
    <property type="entry name" value="Ribosomal_bL32"/>
</dbReference>
<dbReference type="InterPro" id="IPR044957">
    <property type="entry name" value="Ribosomal_bL32_bact"/>
</dbReference>
<dbReference type="InterPro" id="IPR011332">
    <property type="entry name" value="Ribosomal_zn-bd"/>
</dbReference>
<dbReference type="NCBIfam" id="TIGR01031">
    <property type="entry name" value="rpmF_bact"/>
    <property type="match status" value="1"/>
</dbReference>
<dbReference type="PANTHER" id="PTHR35534">
    <property type="entry name" value="50S RIBOSOMAL PROTEIN L32"/>
    <property type="match status" value="1"/>
</dbReference>
<dbReference type="PANTHER" id="PTHR35534:SF1">
    <property type="entry name" value="LARGE RIBOSOMAL SUBUNIT PROTEIN BL32"/>
    <property type="match status" value="1"/>
</dbReference>
<dbReference type="Pfam" id="PF01783">
    <property type="entry name" value="Ribosomal_L32p"/>
    <property type="match status" value="1"/>
</dbReference>
<dbReference type="SUPFAM" id="SSF57829">
    <property type="entry name" value="Zn-binding ribosomal proteins"/>
    <property type="match status" value="1"/>
</dbReference>
<keyword id="KW-1185">Reference proteome</keyword>
<keyword id="KW-0687">Ribonucleoprotein</keyword>
<keyword id="KW-0689">Ribosomal protein</keyword>
<protein>
    <recommendedName>
        <fullName evidence="1">Large ribosomal subunit protein bL32</fullName>
    </recommendedName>
    <alternativeName>
        <fullName evidence="2">50S ribosomal protein L32</fullName>
    </alternativeName>
</protein>
<gene>
    <name evidence="1" type="primary">rpmF</name>
    <name type="ordered locus">SPO2492</name>
</gene>
<comment type="similarity">
    <text evidence="1">Belongs to the bacterial ribosomal protein bL32 family.</text>
</comment>
<name>RL32_RUEPO</name>
<reference key="1">
    <citation type="journal article" date="2004" name="Nature">
        <title>Genome sequence of Silicibacter pomeroyi reveals adaptations to the marine environment.</title>
        <authorList>
            <person name="Moran M.A."/>
            <person name="Buchan A."/>
            <person name="Gonzalez J.M."/>
            <person name="Heidelberg J.F."/>
            <person name="Whitman W.B."/>
            <person name="Kiene R.P."/>
            <person name="Henriksen J.R."/>
            <person name="King G.M."/>
            <person name="Belas R."/>
            <person name="Fuqua C."/>
            <person name="Brinkac L.M."/>
            <person name="Lewis M."/>
            <person name="Johri S."/>
            <person name="Weaver B."/>
            <person name="Pai G."/>
            <person name="Eisen J.A."/>
            <person name="Rahe E."/>
            <person name="Sheldon W.M."/>
            <person name="Ye W."/>
            <person name="Miller T.R."/>
            <person name="Carlton J."/>
            <person name="Rasko D.A."/>
            <person name="Paulsen I.T."/>
            <person name="Ren Q."/>
            <person name="Daugherty S.C."/>
            <person name="DeBoy R.T."/>
            <person name="Dodson R.J."/>
            <person name="Durkin A.S."/>
            <person name="Madupu R."/>
            <person name="Nelson W.C."/>
            <person name="Sullivan S.A."/>
            <person name="Rosovitz M.J."/>
            <person name="Haft D.H."/>
            <person name="Selengut J."/>
            <person name="Ward N."/>
        </authorList>
    </citation>
    <scope>NUCLEOTIDE SEQUENCE [LARGE SCALE GENOMIC DNA]</scope>
    <source>
        <strain>ATCC 700808 / DSM 15171 / DSS-3</strain>
    </source>
</reference>
<reference key="2">
    <citation type="journal article" date="2014" name="Stand. Genomic Sci.">
        <title>An updated genome annotation for the model marine bacterium Ruegeria pomeroyi DSS-3.</title>
        <authorList>
            <person name="Rivers A.R."/>
            <person name="Smith C.B."/>
            <person name="Moran M.A."/>
        </authorList>
    </citation>
    <scope>GENOME REANNOTATION</scope>
    <source>
        <strain>ATCC 700808 / DSM 15171 / DSS-3</strain>
    </source>
</reference>
<evidence type="ECO:0000255" key="1">
    <source>
        <dbReference type="HAMAP-Rule" id="MF_00340"/>
    </source>
</evidence>
<evidence type="ECO:0000305" key="2"/>
<proteinExistence type="inferred from homology"/>
<accession>Q5LQJ7</accession>
<feature type="chain" id="PRO_0000225765" description="Large ribosomal subunit protein bL32">
    <location>
        <begin position="1"/>
        <end position="68"/>
    </location>
</feature>
<sequence>MAVQQNKVSKSRRNMRRAHDALVAANPNECGNCGELKRPHHVCAACGHYDDREVVAQADEIELDEDAA</sequence>
<organism>
    <name type="scientific">Ruegeria pomeroyi (strain ATCC 700808 / DSM 15171 / DSS-3)</name>
    <name type="common">Silicibacter pomeroyi</name>
    <dbReference type="NCBI Taxonomy" id="246200"/>
    <lineage>
        <taxon>Bacteria</taxon>
        <taxon>Pseudomonadati</taxon>
        <taxon>Pseudomonadota</taxon>
        <taxon>Alphaproteobacteria</taxon>
        <taxon>Rhodobacterales</taxon>
        <taxon>Roseobacteraceae</taxon>
        <taxon>Ruegeria</taxon>
    </lineage>
</organism>